<proteinExistence type="evidence at protein level"/>
<name>M35_MUHVK</name>
<gene>
    <name type="primary">M35</name>
</gene>
<accession>A8E1G1</accession>
<feature type="chain" id="PRO_0000442578" description="Protein M35">
    <location>
        <begin position="1"/>
        <end position="519"/>
    </location>
</feature>
<feature type="region of interest" description="Disordered" evidence="1">
    <location>
        <begin position="485"/>
        <end position="519"/>
    </location>
</feature>
<feature type="compositionally biased region" description="Basic residues" evidence="1">
    <location>
        <begin position="510"/>
        <end position="519"/>
    </location>
</feature>
<dbReference type="EMBL" id="AM886412">
    <property type="protein sequence ID" value="CAP08082.1"/>
    <property type="molecule type" value="Genomic_DNA"/>
</dbReference>
<dbReference type="PDB" id="8BTJ">
    <property type="method" value="X-ray"/>
    <property type="resolution" value="1.94 A"/>
    <property type="chains" value="A/B=2-452"/>
</dbReference>
<dbReference type="PDBsum" id="8BTJ"/>
<dbReference type="SMR" id="A8E1G1"/>
<dbReference type="Proteomes" id="UP000158680">
    <property type="component" value="Segment"/>
</dbReference>
<dbReference type="GO" id="GO:0042025">
    <property type="term" value="C:host cell nucleus"/>
    <property type="evidence" value="ECO:0007669"/>
    <property type="project" value="UniProtKB-SubCell"/>
</dbReference>
<dbReference type="InterPro" id="IPR006731">
    <property type="entry name" value="Herpes_pp85"/>
</dbReference>
<dbReference type="Pfam" id="PF04637">
    <property type="entry name" value="Herpes_pp85"/>
    <property type="match status" value="2"/>
</dbReference>
<protein>
    <recommendedName>
        <fullName>Protein M35</fullName>
    </recommendedName>
</protein>
<organismHost>
    <name type="scientific">Mus musculus</name>
    <name type="common">Mouse</name>
    <dbReference type="NCBI Taxonomy" id="10090"/>
</organismHost>
<reference key="1">
    <citation type="journal article" date="2005" name="J. Virol.">
        <title>Use of a murine cytomegalovirus K181-derived bacterial artificial chromosome as a vaccine vector for immunocontraception.</title>
        <authorList>
            <person name="Redwood A.J."/>
            <person name="Messerle M."/>
            <person name="Harvey N.L."/>
            <person name="Hardy C.M."/>
            <person name="Kozinowski U.H."/>
            <person name="Lawson M.A."/>
            <person name="Shellam G.R."/>
        </authorList>
    </citation>
    <scope>NUCLEOTIDE SEQUENCE [LARGE SCALE GENOMIC DNA]</scope>
</reference>
<reference key="2">
    <citation type="journal article" date="2008" name="J. Virol.">
        <title>Laboratory strains of murine cytomegalovirus are genetically similar to but phenotypically distinct from wild strains of virus.</title>
        <authorList>
            <person name="Smith L.M."/>
            <person name="McWhorter A.R."/>
            <person name="Masters L.L."/>
            <person name="Shellam G.R."/>
            <person name="Redwood A.J."/>
        </authorList>
    </citation>
    <scope>NUCLEOTIDE SEQUENCE [LARGE SCALE GENOMIC DNA]</scope>
</reference>
<reference key="3">
    <citation type="journal article" date="2017" name="PLoS Pathog.">
        <title>The murine cytomegalovirus M35 protein antagonizes type I IFN induction downstream of pattern recognition receptors by targeting NF-kappaB mediated transcription.</title>
        <authorList>
            <person name="Chan B."/>
            <person name="Goncalves Magalhaes V."/>
            <person name="Lemmermann N.A.W."/>
            <person name="Juranic Lisnic V."/>
            <person name="Stempel M."/>
            <person name="Bussey K.A."/>
            <person name="Reimer E."/>
            <person name="Podlech J."/>
            <person name="Lienenklaus S."/>
            <person name="Reddehase M.J."/>
            <person name="Jonjic S."/>
            <person name="Brinkmann M.M."/>
        </authorList>
    </citation>
    <scope>FUNCTION</scope>
    <scope>SUBCELLULAR LOCATION</scope>
</reference>
<comment type="function">
    <text evidence="2">Plays a role in the inhibition of host type I interferon production within the host nucleus. Targets specifically the NF-kappa-B-mediated interferon-beta transcription.</text>
</comment>
<comment type="subcellular location">
    <subcellularLocation>
        <location evidence="2">Host nucleus</location>
    </subcellularLocation>
    <text evidence="2">Found in the host nucleus but is excluded from the nucleoli.</text>
</comment>
<organism>
    <name type="scientific">Murid herpesvirus 1 (strain K181)</name>
    <name type="common">MuHV-1</name>
    <name type="synonym">Mouse cytomegalovirus</name>
    <dbReference type="NCBI Taxonomy" id="69156"/>
    <lineage>
        <taxon>Viruses</taxon>
        <taxon>Duplodnaviria</taxon>
        <taxon>Heunggongvirae</taxon>
        <taxon>Peploviricota</taxon>
        <taxon>Herviviricetes</taxon>
        <taxon>Herpesvirales</taxon>
        <taxon>Orthoherpesviridae</taxon>
        <taxon>Betaherpesvirinae</taxon>
        <taxon>Muromegalovirus</taxon>
        <taxon>Muromegalovirus muridbeta1</taxon>
        <taxon>Murid herpesvirus 1</taxon>
    </lineage>
</organism>
<sequence>MAAPTEEDPRRDTSLMINERCNFPHNMLSEENINFIQDAVCNGDLGAVAALNSGLPMAPYMLEALLAVRVKHRLTKVRQTLEPVICYTISVAHLINGTRILRSATAKHATAWGPNDKHRAESGLRRIYRALNLEDNPFDLVEAVGDLDLSQGAYEGYVRHIYSLMKSLGHDVGHLSRSLDYSTMTVFNYLYESPLFTSQEAVTMYSRNLAGITKMSREPFETLSVVHRSKEPPEILNDMLFLLSVGRMIVLHQESLRALRKNLILTASALCSILYTAYTQVPETKSLFREVAHEAHALLSSRSPDTPNFRPFVACMLQFIKQIIAADVYTCPRYLTNQILAVTARMHGLEGAAMGHDDDLDIEVDPGNPYSAKYRMNNPYNDQNIFKCPRSLVHYVGDALFKKTMTQELLVSCTDQEATYQTYELPSVSELVGEGVAKRAHLTPDQLSHYLSVVSTPVEVVTDDIEDGEQEEDLFADVSVAPASPVRPIRGGGQRMANMRGARPYSTVQRGRRRHESEV</sequence>
<evidence type="ECO:0000256" key="1">
    <source>
        <dbReference type="SAM" id="MobiDB-lite"/>
    </source>
</evidence>
<evidence type="ECO:0000269" key="2">
    <source>
    </source>
</evidence>
<keyword id="KW-0002">3D-structure</keyword>
<keyword id="KW-1048">Host nucleus</keyword>
<keyword id="KW-1185">Reference proteome</keyword>